<feature type="signal peptide" evidence="2">
    <location>
        <begin position="1"/>
        <end position="20"/>
    </location>
</feature>
<feature type="chain" id="PRO_5000220231" description="Probable beta-glucosidase D">
    <location>
        <begin position="21"/>
        <end position="754"/>
    </location>
</feature>
<feature type="region of interest" description="Disordered" evidence="3">
    <location>
        <begin position="186"/>
        <end position="206"/>
    </location>
</feature>
<feature type="compositionally biased region" description="Gly residues" evidence="3">
    <location>
        <begin position="188"/>
        <end position="198"/>
    </location>
</feature>
<feature type="active site" evidence="1">
    <location>
        <position position="267"/>
    </location>
</feature>
<feature type="glycosylation site" description="N-linked (GlcNAc...) asparagine" evidence="2">
    <location>
        <position position="66"/>
    </location>
</feature>
<feature type="glycosylation site" description="N-linked (GlcNAc...) asparagine" evidence="2">
    <location>
        <position position="69"/>
    </location>
</feature>
<feature type="glycosylation site" description="N-linked (GlcNAc...) asparagine" evidence="2">
    <location>
        <position position="186"/>
    </location>
</feature>
<feature type="glycosylation site" description="N-linked (GlcNAc...) asparagine" evidence="2">
    <location>
        <position position="239"/>
    </location>
</feature>
<feature type="glycosylation site" description="N-linked (GlcNAc...) asparagine" evidence="2">
    <location>
        <position position="301"/>
    </location>
</feature>
<feature type="glycosylation site" description="N-linked (GlcNAc...) asparagine" evidence="2">
    <location>
        <position position="345"/>
    </location>
</feature>
<feature type="glycosylation site" description="N-linked (GlcNAc...) asparagine" evidence="2">
    <location>
        <position position="443"/>
    </location>
</feature>
<feature type="glycosylation site" description="N-linked (GlcNAc...) asparagine" evidence="2">
    <location>
        <position position="512"/>
    </location>
</feature>
<feature type="glycosylation site" description="N-linked (GlcNAc...) asparagine" evidence="2">
    <location>
        <position position="534"/>
    </location>
</feature>
<feature type="glycosylation site" description="N-linked (GlcNAc...) asparagine" evidence="2">
    <location>
        <position position="573"/>
    </location>
</feature>
<feature type="glycosylation site" description="N-linked (GlcNAc...) asparagine" evidence="2">
    <location>
        <position position="588"/>
    </location>
</feature>
<feature type="glycosylation site" description="N-linked (GlcNAc...) asparagine" evidence="2">
    <location>
        <position position="655"/>
    </location>
</feature>
<feature type="glycosylation site" description="N-linked (GlcNAc...) asparagine" evidence="2">
    <location>
        <position position="745"/>
    </location>
</feature>
<proteinExistence type="inferred from homology"/>
<gene>
    <name type="primary">bglD</name>
    <name type="ORF">An07g09760</name>
</gene>
<organism>
    <name type="scientific">Aspergillus niger (strain ATCC MYA-4892 / CBS 513.88 / FGSC A1513)</name>
    <dbReference type="NCBI Taxonomy" id="425011"/>
    <lineage>
        <taxon>Eukaryota</taxon>
        <taxon>Fungi</taxon>
        <taxon>Dikarya</taxon>
        <taxon>Ascomycota</taxon>
        <taxon>Pezizomycotina</taxon>
        <taxon>Eurotiomycetes</taxon>
        <taxon>Eurotiomycetidae</taxon>
        <taxon>Eurotiales</taxon>
        <taxon>Aspergillaceae</taxon>
        <taxon>Aspergillus</taxon>
        <taxon>Aspergillus subgen. Circumdati</taxon>
    </lineage>
</organism>
<sequence>MKVLSFIVAAALLGLTGASSNSSPGLLKSDGVVLGDWESAYQKASSFVAGLTTDQKLALITGSSVNSTNGSFSGLTFLDGDMGLQNFFYVSAFSLSSALAMTWDRDAIYAQAKAVGSEFYNKGIQVVAGPTSQPLGRTPWGGRIVEGFGPDPYLNGLASGLTAKGYIDAGVIPGAKHFLLYEQETNRTGGGGGGGGDSGSAPYSSNADDKTLHETYLWPFYDAVKHGLGAVMCAMTKVNGTLSCQNSDLLMKHLKTELGFPGLVWPDTNGQSSALESAVNGEDYGSSSIWSTSTMETLLSNGSLSEARLDDMAVRNLMGYYYVNLDNGLQPEEQSEDAYVDVRGNHSKLIRENGAKSMALLKNKNALPLRKPRVMSVFGAHAGPVLGGPNTAMDIEGSGPTYQGHLATGTGSAQASLPYLVPPYVALTNRIIEDGTMMRWVLNDTYSSSSTSGLITEGTDSTAVDPSFADYATNSDACLVFLNALSGEGADRTELYNDDQDTMVNTVADNCNNTIVIINTVGPRLMDQWIEHDNVTAVLYGSLLGQESGNSIVDILYGDVNPSGRLIHTIAKNESDYNVKICYTAQCNFTEGVYLDYRYFDAHNVTPRYPFGHGLSYTTFSYSDLNIEKPSTLSKYPTGEKAVGGNSDLWDIVGNVSVKVANTGSLDGAEVPQLYLGFPTAAQQPVRQLRGFERVEIASGKQSQVTFQLRRRDISYWDVPAQQWLVASGDYKVYVGASSRDLKLNGTFTVQTSS</sequence>
<dbReference type="EC" id="3.2.1.21"/>
<dbReference type="EMBL" id="AM270153">
    <property type="protein sequence ID" value="CAK39741.1"/>
    <property type="status" value="ALT_SEQ"/>
    <property type="molecule type" value="Genomic_DNA"/>
</dbReference>
<dbReference type="SMR" id="A2QPK4"/>
<dbReference type="CAZy" id="GH3">
    <property type="family name" value="Glycoside Hydrolase Family 3"/>
</dbReference>
<dbReference type="GlyCosmos" id="A2QPK4">
    <property type="glycosylation" value="13 sites, No reported glycans"/>
</dbReference>
<dbReference type="EnsemblFungi" id="CAK39741">
    <property type="protein sequence ID" value="CAK39741"/>
    <property type="gene ID" value="An07g09760"/>
</dbReference>
<dbReference type="UniPathway" id="UPA00696"/>
<dbReference type="Proteomes" id="UP000006706">
    <property type="component" value="Chromosome 4L"/>
</dbReference>
<dbReference type="GO" id="GO:0005576">
    <property type="term" value="C:extracellular region"/>
    <property type="evidence" value="ECO:0007669"/>
    <property type="project" value="UniProtKB-SubCell"/>
</dbReference>
<dbReference type="GO" id="GO:0008422">
    <property type="term" value="F:beta-glucosidase activity"/>
    <property type="evidence" value="ECO:0007669"/>
    <property type="project" value="UniProtKB-EC"/>
</dbReference>
<dbReference type="GO" id="GO:0030245">
    <property type="term" value="P:cellulose catabolic process"/>
    <property type="evidence" value="ECO:0007669"/>
    <property type="project" value="UniProtKB-UniPathway"/>
</dbReference>
<dbReference type="FunFam" id="2.60.40.10:FF:000757">
    <property type="entry name" value="Beta-glucosidase G"/>
    <property type="match status" value="1"/>
</dbReference>
<dbReference type="FunFam" id="3.20.20.300:FF:000002">
    <property type="entry name" value="Probable beta-glucosidase"/>
    <property type="match status" value="1"/>
</dbReference>
<dbReference type="FunFam" id="3.40.50.1700:FF:000021">
    <property type="entry name" value="Probable beta-glucosidase D"/>
    <property type="match status" value="1"/>
</dbReference>
<dbReference type="Gene3D" id="3.40.50.1700">
    <property type="entry name" value="Glycoside hydrolase family 3 C-terminal domain"/>
    <property type="match status" value="1"/>
</dbReference>
<dbReference type="Gene3D" id="3.20.20.300">
    <property type="entry name" value="Glycoside hydrolase, family 3, N-terminal domain"/>
    <property type="match status" value="1"/>
</dbReference>
<dbReference type="Gene3D" id="2.60.40.10">
    <property type="entry name" value="Immunoglobulins"/>
    <property type="match status" value="1"/>
</dbReference>
<dbReference type="InterPro" id="IPR050288">
    <property type="entry name" value="Cellulose_deg_GH3"/>
</dbReference>
<dbReference type="InterPro" id="IPR026891">
    <property type="entry name" value="Fn3-like"/>
</dbReference>
<dbReference type="InterPro" id="IPR002772">
    <property type="entry name" value="Glyco_hydro_3_C"/>
</dbReference>
<dbReference type="InterPro" id="IPR036881">
    <property type="entry name" value="Glyco_hydro_3_C_sf"/>
</dbReference>
<dbReference type="InterPro" id="IPR001764">
    <property type="entry name" value="Glyco_hydro_3_N"/>
</dbReference>
<dbReference type="InterPro" id="IPR036962">
    <property type="entry name" value="Glyco_hydro_3_N_sf"/>
</dbReference>
<dbReference type="InterPro" id="IPR017853">
    <property type="entry name" value="Glycoside_hydrolase_SF"/>
</dbReference>
<dbReference type="InterPro" id="IPR013783">
    <property type="entry name" value="Ig-like_fold"/>
</dbReference>
<dbReference type="PANTHER" id="PTHR42715">
    <property type="entry name" value="BETA-GLUCOSIDASE"/>
    <property type="match status" value="1"/>
</dbReference>
<dbReference type="PANTHER" id="PTHR42715:SF14">
    <property type="entry name" value="BETA-GLUCOSIDASE D-RELATED"/>
    <property type="match status" value="1"/>
</dbReference>
<dbReference type="Pfam" id="PF14310">
    <property type="entry name" value="Fn3-like"/>
    <property type="match status" value="1"/>
</dbReference>
<dbReference type="Pfam" id="PF00933">
    <property type="entry name" value="Glyco_hydro_3"/>
    <property type="match status" value="1"/>
</dbReference>
<dbReference type="Pfam" id="PF01915">
    <property type="entry name" value="Glyco_hydro_3_C"/>
    <property type="match status" value="1"/>
</dbReference>
<dbReference type="PRINTS" id="PR00133">
    <property type="entry name" value="GLHYDRLASE3"/>
</dbReference>
<dbReference type="SMART" id="SM01217">
    <property type="entry name" value="Fn3_like"/>
    <property type="match status" value="1"/>
</dbReference>
<dbReference type="SUPFAM" id="SSF51445">
    <property type="entry name" value="(Trans)glycosidases"/>
    <property type="match status" value="1"/>
</dbReference>
<dbReference type="SUPFAM" id="SSF52279">
    <property type="entry name" value="Beta-D-glucan exohydrolase, C-terminal domain"/>
    <property type="match status" value="1"/>
</dbReference>
<name>BGLD_ASPNC</name>
<keyword id="KW-0119">Carbohydrate metabolism</keyword>
<keyword id="KW-0136">Cellulose degradation</keyword>
<keyword id="KW-0325">Glycoprotein</keyword>
<keyword id="KW-0326">Glycosidase</keyword>
<keyword id="KW-0378">Hydrolase</keyword>
<keyword id="KW-0624">Polysaccharide degradation</keyword>
<keyword id="KW-1185">Reference proteome</keyword>
<keyword id="KW-0964">Secreted</keyword>
<keyword id="KW-0732">Signal</keyword>
<accession>A2QPK4</accession>
<comment type="function">
    <text evidence="1">Beta-glucosidases are one of a number of cellulolytic enzymes involved in the degradation of cellulosic biomass. Catalyzes the last step releasing glucose from the inhibitory cellobiose (By similarity).</text>
</comment>
<comment type="catalytic activity">
    <reaction>
        <text>Hydrolysis of terminal, non-reducing beta-D-glucosyl residues with release of beta-D-glucose.</text>
        <dbReference type="EC" id="3.2.1.21"/>
    </reaction>
</comment>
<comment type="pathway">
    <text>Glycan metabolism; cellulose degradation.</text>
</comment>
<comment type="subcellular location">
    <subcellularLocation>
        <location evidence="1">Secreted</location>
    </subcellularLocation>
</comment>
<comment type="similarity">
    <text evidence="4">Belongs to the glycosyl hydrolase 3 family.</text>
</comment>
<comment type="sequence caution" evidence="4">
    <conflict type="erroneous gene model prediction">
        <sequence resource="EMBL-CDS" id="CAK39741"/>
    </conflict>
</comment>
<protein>
    <recommendedName>
        <fullName>Probable beta-glucosidase D</fullName>
        <ecNumber>3.2.1.21</ecNumber>
    </recommendedName>
    <alternativeName>
        <fullName>Beta-D-glucoside glucohydrolase D</fullName>
    </alternativeName>
    <alternativeName>
        <fullName>Cellobiase D</fullName>
    </alternativeName>
    <alternativeName>
        <fullName>Gentiobiase D</fullName>
    </alternativeName>
</protein>
<evidence type="ECO:0000250" key="1"/>
<evidence type="ECO:0000255" key="2"/>
<evidence type="ECO:0000256" key="3">
    <source>
        <dbReference type="SAM" id="MobiDB-lite"/>
    </source>
</evidence>
<evidence type="ECO:0000305" key="4"/>
<reference key="1">
    <citation type="journal article" date="2007" name="Nat. Biotechnol.">
        <title>Genome sequencing and analysis of the versatile cell factory Aspergillus niger CBS 513.88.</title>
        <authorList>
            <person name="Pel H.J."/>
            <person name="de Winde J.H."/>
            <person name="Archer D.B."/>
            <person name="Dyer P.S."/>
            <person name="Hofmann G."/>
            <person name="Schaap P.J."/>
            <person name="Turner G."/>
            <person name="de Vries R.P."/>
            <person name="Albang R."/>
            <person name="Albermann K."/>
            <person name="Andersen M.R."/>
            <person name="Bendtsen J.D."/>
            <person name="Benen J.A.E."/>
            <person name="van den Berg M."/>
            <person name="Breestraat S."/>
            <person name="Caddick M.X."/>
            <person name="Contreras R."/>
            <person name="Cornell M."/>
            <person name="Coutinho P.M."/>
            <person name="Danchin E.G.J."/>
            <person name="Debets A.J.M."/>
            <person name="Dekker P."/>
            <person name="van Dijck P.W.M."/>
            <person name="van Dijk A."/>
            <person name="Dijkhuizen L."/>
            <person name="Driessen A.J.M."/>
            <person name="d'Enfert C."/>
            <person name="Geysens S."/>
            <person name="Goosen C."/>
            <person name="Groot G.S.P."/>
            <person name="de Groot P.W.J."/>
            <person name="Guillemette T."/>
            <person name="Henrissat B."/>
            <person name="Herweijer M."/>
            <person name="van den Hombergh J.P.T.W."/>
            <person name="van den Hondel C.A.M.J.J."/>
            <person name="van der Heijden R.T.J.M."/>
            <person name="van der Kaaij R.M."/>
            <person name="Klis F.M."/>
            <person name="Kools H.J."/>
            <person name="Kubicek C.P."/>
            <person name="van Kuyk P.A."/>
            <person name="Lauber J."/>
            <person name="Lu X."/>
            <person name="van der Maarel M.J.E.C."/>
            <person name="Meulenberg R."/>
            <person name="Menke H."/>
            <person name="Mortimer M.A."/>
            <person name="Nielsen J."/>
            <person name="Oliver S.G."/>
            <person name="Olsthoorn M."/>
            <person name="Pal K."/>
            <person name="van Peij N.N.M.E."/>
            <person name="Ram A.F.J."/>
            <person name="Rinas U."/>
            <person name="Roubos J.A."/>
            <person name="Sagt C.M.J."/>
            <person name="Schmoll M."/>
            <person name="Sun J."/>
            <person name="Ussery D."/>
            <person name="Varga J."/>
            <person name="Vervecken W."/>
            <person name="van de Vondervoort P.J.J."/>
            <person name="Wedler H."/>
            <person name="Woesten H.A.B."/>
            <person name="Zeng A.-P."/>
            <person name="van Ooyen A.J.J."/>
            <person name="Visser J."/>
            <person name="Stam H."/>
        </authorList>
    </citation>
    <scope>NUCLEOTIDE SEQUENCE [LARGE SCALE GENOMIC DNA]</scope>
    <source>
        <strain>ATCC MYA-4892 / CBS 513.88 / FGSC A1513</strain>
    </source>
</reference>